<accession>Q9ZBL0</accession>
<proteinExistence type="inferred from homology"/>
<organism>
    <name type="scientific">Mycobacterium leprae (strain TN)</name>
    <dbReference type="NCBI Taxonomy" id="272631"/>
    <lineage>
        <taxon>Bacteria</taxon>
        <taxon>Bacillati</taxon>
        <taxon>Actinomycetota</taxon>
        <taxon>Actinomycetes</taxon>
        <taxon>Mycobacteriales</taxon>
        <taxon>Mycobacteriaceae</taxon>
        <taxon>Mycobacterium</taxon>
    </lineage>
</organism>
<keyword id="KW-0004">4Fe-4S</keyword>
<keyword id="KW-0408">Iron</keyword>
<keyword id="KW-0411">Iron-sulfur</keyword>
<keyword id="KW-0456">Lyase</keyword>
<keyword id="KW-0479">Metal-binding</keyword>
<keyword id="KW-1185">Reference proteome</keyword>
<keyword id="KW-0949">S-adenosyl-L-methionine</keyword>
<keyword id="KW-0784">Thiamine biosynthesis</keyword>
<keyword id="KW-0862">Zinc</keyword>
<dbReference type="EC" id="4.1.99.17" evidence="1"/>
<dbReference type="EMBL" id="AL035159">
    <property type="protein sequence ID" value="CAA22712.1"/>
    <property type="molecule type" value="Genomic_DNA"/>
</dbReference>
<dbReference type="EMBL" id="AL583918">
    <property type="protein sequence ID" value="CAC29802.1"/>
    <property type="molecule type" value="Genomic_DNA"/>
</dbReference>
<dbReference type="PIR" id="T44743">
    <property type="entry name" value="T44743"/>
</dbReference>
<dbReference type="RefSeq" id="NP_301331.1">
    <property type="nucleotide sequence ID" value="NC_002677.1"/>
</dbReference>
<dbReference type="SMR" id="Q9ZBL0"/>
<dbReference type="STRING" id="272631.gene:17574113"/>
<dbReference type="KEGG" id="mle:ML0294"/>
<dbReference type="PATRIC" id="fig|272631.5.peg.462"/>
<dbReference type="Leproma" id="ML0294"/>
<dbReference type="eggNOG" id="COG0422">
    <property type="taxonomic scope" value="Bacteria"/>
</dbReference>
<dbReference type="HOGENOM" id="CLU_013181_2_1_11"/>
<dbReference type="OrthoDB" id="9805897at2"/>
<dbReference type="UniPathway" id="UPA00060"/>
<dbReference type="Proteomes" id="UP000000806">
    <property type="component" value="Chromosome"/>
</dbReference>
<dbReference type="GO" id="GO:0005829">
    <property type="term" value="C:cytosol"/>
    <property type="evidence" value="ECO:0007669"/>
    <property type="project" value="TreeGrafter"/>
</dbReference>
<dbReference type="GO" id="GO:0051539">
    <property type="term" value="F:4 iron, 4 sulfur cluster binding"/>
    <property type="evidence" value="ECO:0007669"/>
    <property type="project" value="UniProtKB-KW"/>
</dbReference>
<dbReference type="GO" id="GO:0016830">
    <property type="term" value="F:carbon-carbon lyase activity"/>
    <property type="evidence" value="ECO:0007669"/>
    <property type="project" value="InterPro"/>
</dbReference>
<dbReference type="GO" id="GO:0008270">
    <property type="term" value="F:zinc ion binding"/>
    <property type="evidence" value="ECO:0007669"/>
    <property type="project" value="UniProtKB-UniRule"/>
</dbReference>
<dbReference type="GO" id="GO:0009228">
    <property type="term" value="P:thiamine biosynthetic process"/>
    <property type="evidence" value="ECO:0007669"/>
    <property type="project" value="UniProtKB-KW"/>
</dbReference>
<dbReference type="GO" id="GO:0009229">
    <property type="term" value="P:thiamine diphosphate biosynthetic process"/>
    <property type="evidence" value="ECO:0007669"/>
    <property type="project" value="UniProtKB-UniRule"/>
</dbReference>
<dbReference type="FunFam" id="3.20.20.540:FF:000001">
    <property type="entry name" value="Phosphomethylpyrimidine synthase"/>
    <property type="match status" value="1"/>
</dbReference>
<dbReference type="Gene3D" id="6.10.250.620">
    <property type="match status" value="1"/>
</dbReference>
<dbReference type="Gene3D" id="3.20.20.540">
    <property type="entry name" value="Radical SAM ThiC family, central domain"/>
    <property type="match status" value="1"/>
</dbReference>
<dbReference type="HAMAP" id="MF_00089">
    <property type="entry name" value="ThiC"/>
    <property type="match status" value="1"/>
</dbReference>
<dbReference type="InterPro" id="IPR037509">
    <property type="entry name" value="ThiC"/>
</dbReference>
<dbReference type="InterPro" id="IPR025747">
    <property type="entry name" value="ThiC-associated_dom"/>
</dbReference>
<dbReference type="InterPro" id="IPR038521">
    <property type="entry name" value="ThiC/Bza_core_dom"/>
</dbReference>
<dbReference type="InterPro" id="IPR002817">
    <property type="entry name" value="ThiC/BzaA/B"/>
</dbReference>
<dbReference type="NCBIfam" id="NF006763">
    <property type="entry name" value="PRK09284.1"/>
    <property type="match status" value="1"/>
</dbReference>
<dbReference type="NCBIfam" id="NF009895">
    <property type="entry name" value="PRK13352.1"/>
    <property type="match status" value="1"/>
</dbReference>
<dbReference type="NCBIfam" id="TIGR00190">
    <property type="entry name" value="thiC"/>
    <property type="match status" value="1"/>
</dbReference>
<dbReference type="PANTHER" id="PTHR30557:SF1">
    <property type="entry name" value="PHOSPHOMETHYLPYRIMIDINE SYNTHASE, CHLOROPLASTIC"/>
    <property type="match status" value="1"/>
</dbReference>
<dbReference type="PANTHER" id="PTHR30557">
    <property type="entry name" value="THIAMINE BIOSYNTHESIS PROTEIN THIC"/>
    <property type="match status" value="1"/>
</dbReference>
<dbReference type="Pfam" id="PF13667">
    <property type="entry name" value="ThiC-associated"/>
    <property type="match status" value="1"/>
</dbReference>
<dbReference type="Pfam" id="PF01964">
    <property type="entry name" value="ThiC_Rad_SAM"/>
    <property type="match status" value="1"/>
</dbReference>
<dbReference type="SFLD" id="SFLDF00407">
    <property type="entry name" value="phosphomethylpyrimidine_syntha"/>
    <property type="match status" value="1"/>
</dbReference>
<dbReference type="SFLD" id="SFLDG01114">
    <property type="entry name" value="phosphomethylpyrimidine_syntha"/>
    <property type="match status" value="1"/>
</dbReference>
<dbReference type="SFLD" id="SFLDS00113">
    <property type="entry name" value="Radical_SAM_Phosphomethylpyrim"/>
    <property type="match status" value="1"/>
</dbReference>
<feature type="chain" id="PRO_0000152813" description="Phosphomethylpyrimidine synthase">
    <location>
        <begin position="1"/>
        <end position="547"/>
    </location>
</feature>
<feature type="region of interest" description="Disordered" evidence="2">
    <location>
        <begin position="1"/>
        <end position="36"/>
    </location>
</feature>
<feature type="compositionally biased region" description="Polar residues" evidence="2">
    <location>
        <begin position="1"/>
        <end position="15"/>
    </location>
</feature>
<feature type="binding site" evidence="1">
    <location>
        <position position="150"/>
    </location>
    <ligand>
        <name>substrate</name>
    </ligand>
</feature>
<feature type="binding site" evidence="1">
    <location>
        <position position="179"/>
    </location>
    <ligand>
        <name>substrate</name>
    </ligand>
</feature>
<feature type="binding site" evidence="1">
    <location>
        <position position="208"/>
    </location>
    <ligand>
        <name>substrate</name>
    </ligand>
</feature>
<feature type="binding site" evidence="1">
    <location>
        <position position="244"/>
    </location>
    <ligand>
        <name>substrate</name>
    </ligand>
</feature>
<feature type="binding site" evidence="1">
    <location>
        <begin position="264"/>
        <end position="266"/>
    </location>
    <ligand>
        <name>substrate</name>
    </ligand>
</feature>
<feature type="binding site" evidence="1">
    <location>
        <begin position="305"/>
        <end position="308"/>
    </location>
    <ligand>
        <name>substrate</name>
    </ligand>
</feature>
<feature type="binding site" evidence="1">
    <location>
        <position position="344"/>
    </location>
    <ligand>
        <name>substrate</name>
    </ligand>
</feature>
<feature type="binding site" evidence="1">
    <location>
        <position position="348"/>
    </location>
    <ligand>
        <name>Zn(2+)</name>
        <dbReference type="ChEBI" id="CHEBI:29105"/>
    </ligand>
</feature>
<feature type="binding site" evidence="1">
    <location>
        <position position="371"/>
    </location>
    <ligand>
        <name>substrate</name>
    </ligand>
</feature>
<feature type="binding site" evidence="1">
    <location>
        <position position="412"/>
    </location>
    <ligand>
        <name>Zn(2+)</name>
        <dbReference type="ChEBI" id="CHEBI:29105"/>
    </ligand>
</feature>
<feature type="binding site" evidence="1">
    <location>
        <position position="492"/>
    </location>
    <ligand>
        <name>[4Fe-4S] cluster</name>
        <dbReference type="ChEBI" id="CHEBI:49883"/>
        <note>4Fe-4S-S-AdoMet</note>
    </ligand>
</feature>
<feature type="binding site" evidence="1">
    <location>
        <position position="495"/>
    </location>
    <ligand>
        <name>[4Fe-4S] cluster</name>
        <dbReference type="ChEBI" id="CHEBI:49883"/>
        <note>4Fe-4S-S-AdoMet</note>
    </ligand>
</feature>
<feature type="binding site" evidence="1">
    <location>
        <position position="500"/>
    </location>
    <ligand>
        <name>[4Fe-4S] cluster</name>
        <dbReference type="ChEBI" id="CHEBI:49883"/>
        <note>4Fe-4S-S-AdoMet</note>
    </ligand>
</feature>
<name>THIC_MYCLE</name>
<sequence length="547" mass="59840">MTETLSKTTEPSVTTGPIPGSSKAYREVANPDGGPSLRVPFRRVHLSTGAHFDLYDTSGPYTDPDAVINLTAGLPPRPGVIRDRGTQLQRARAGEITAEMAFIADREGMPAELVRVEVALGRAVIPANHNHPEIEPMIIGKAFAVKVNANIGNSAVTSSIAEEIDKMVWATRWGADTIMDLSTGKNIHETREWILRNSPVPVGTVPIYQALEKVKGDPTKLTWEIYRDTVIEQCEQGVDYMTVHAGVLLRYVLLTAKRVTGIVSRGGSIMASWCLANHRESFLYTNFAELCDIFARYDVTFSLGDGLRPGSIADANDTAQFAELRTLGELSKIAKVHGAQVMIEGPGHIPMHKIVENVRLEEELCEEAPFYTLGPLATDIAPAYDHITSAIGAAVIAQAGTAMLCYVTPKEHLGLPDRKDVKDGVIAYKIAAHAADLAKGYPRAQERDDALSTARFEFRWNDQFALSLDPPTAREFHDETLPAEPAKTAHFCSMCGPKFCSMRITADIRVYAAKHGLDTEEAIEMGMTEKSAEFAEHGNRVYLPLTQ</sequence>
<reference key="1">
    <citation type="journal article" date="2001" name="Nature">
        <title>Massive gene decay in the leprosy bacillus.</title>
        <authorList>
            <person name="Cole S.T."/>
            <person name="Eiglmeier K."/>
            <person name="Parkhill J."/>
            <person name="James K.D."/>
            <person name="Thomson N.R."/>
            <person name="Wheeler P.R."/>
            <person name="Honore N."/>
            <person name="Garnier T."/>
            <person name="Churcher C.M."/>
            <person name="Harris D.E."/>
            <person name="Mungall K.L."/>
            <person name="Basham D."/>
            <person name="Brown D."/>
            <person name="Chillingworth T."/>
            <person name="Connor R."/>
            <person name="Davies R.M."/>
            <person name="Devlin K."/>
            <person name="Duthoy S."/>
            <person name="Feltwell T."/>
            <person name="Fraser A."/>
            <person name="Hamlin N."/>
            <person name="Holroyd S."/>
            <person name="Hornsby T."/>
            <person name="Jagels K."/>
            <person name="Lacroix C."/>
            <person name="Maclean J."/>
            <person name="Moule S."/>
            <person name="Murphy L.D."/>
            <person name="Oliver K."/>
            <person name="Quail M.A."/>
            <person name="Rajandream M.A."/>
            <person name="Rutherford K.M."/>
            <person name="Rutter S."/>
            <person name="Seeger K."/>
            <person name="Simon S."/>
            <person name="Simmonds M."/>
            <person name="Skelton J."/>
            <person name="Squares R."/>
            <person name="Squares S."/>
            <person name="Stevens K."/>
            <person name="Taylor K."/>
            <person name="Whitehead S."/>
            <person name="Woodward J.R."/>
            <person name="Barrell B.G."/>
        </authorList>
    </citation>
    <scope>NUCLEOTIDE SEQUENCE [LARGE SCALE GENOMIC DNA]</scope>
    <source>
        <strain>TN</strain>
    </source>
</reference>
<comment type="function">
    <text evidence="1">Catalyzes the synthesis of the hydroxymethylpyrimidine phosphate (HMP-P) moiety of thiamine from aminoimidazole ribotide (AIR) in a radical S-adenosyl-L-methionine (SAM)-dependent reaction.</text>
</comment>
<comment type="catalytic activity">
    <reaction evidence="1">
        <text>5-amino-1-(5-phospho-beta-D-ribosyl)imidazole + S-adenosyl-L-methionine = 4-amino-2-methyl-5-(phosphooxymethyl)pyrimidine + CO + 5'-deoxyadenosine + formate + L-methionine + 3 H(+)</text>
        <dbReference type="Rhea" id="RHEA:24840"/>
        <dbReference type="ChEBI" id="CHEBI:15378"/>
        <dbReference type="ChEBI" id="CHEBI:15740"/>
        <dbReference type="ChEBI" id="CHEBI:17245"/>
        <dbReference type="ChEBI" id="CHEBI:17319"/>
        <dbReference type="ChEBI" id="CHEBI:57844"/>
        <dbReference type="ChEBI" id="CHEBI:58354"/>
        <dbReference type="ChEBI" id="CHEBI:59789"/>
        <dbReference type="ChEBI" id="CHEBI:137981"/>
        <dbReference type="EC" id="4.1.99.17"/>
    </reaction>
</comment>
<comment type="cofactor">
    <cofactor evidence="1">
        <name>[4Fe-4S] cluster</name>
        <dbReference type="ChEBI" id="CHEBI:49883"/>
    </cofactor>
    <text evidence="1">Binds 1 [4Fe-4S] cluster per subunit. The cluster is coordinated with 3 cysteines and an exchangeable S-adenosyl-L-methionine.</text>
</comment>
<comment type="pathway">
    <text evidence="1">Cofactor biosynthesis; thiamine diphosphate biosynthesis.</text>
</comment>
<comment type="similarity">
    <text evidence="1">Belongs to the ThiC family.</text>
</comment>
<evidence type="ECO:0000255" key="1">
    <source>
        <dbReference type="HAMAP-Rule" id="MF_00089"/>
    </source>
</evidence>
<evidence type="ECO:0000256" key="2">
    <source>
        <dbReference type="SAM" id="MobiDB-lite"/>
    </source>
</evidence>
<protein>
    <recommendedName>
        <fullName evidence="1">Phosphomethylpyrimidine synthase</fullName>
        <ecNumber evidence="1">4.1.99.17</ecNumber>
    </recommendedName>
    <alternativeName>
        <fullName evidence="1">Hydroxymethylpyrimidine phosphate synthase</fullName>
        <shortName evidence="1">HMP-P synthase</shortName>
        <shortName evidence="1">HMP-phosphate synthase</shortName>
        <shortName evidence="1">HMPP synthase</shortName>
    </alternativeName>
    <alternativeName>
        <fullName evidence="1">Thiamine biosynthesis protein ThiC</fullName>
    </alternativeName>
</protein>
<gene>
    <name evidence="1" type="primary">thiC</name>
    <name type="ordered locus">ML0294</name>
    <name type="ORF">MLCB1450.28c</name>
</gene>